<keyword id="KW-0963">Cytoplasm</keyword>
<keyword id="KW-0489">Methyltransferase</keyword>
<keyword id="KW-1185">Reference proteome</keyword>
<keyword id="KW-0694">RNA-binding</keyword>
<keyword id="KW-0698">rRNA processing</keyword>
<keyword id="KW-0949">S-adenosyl-L-methionine</keyword>
<keyword id="KW-0808">Transferase</keyword>
<proteinExistence type="inferred from homology"/>
<name>RSMA_METCA</name>
<protein>
    <recommendedName>
        <fullName evidence="1">Ribosomal RNA small subunit methyltransferase A</fullName>
        <ecNumber evidence="1">2.1.1.182</ecNumber>
    </recommendedName>
    <alternativeName>
        <fullName evidence="1">16S rRNA (adenine(1518)-N(6)/adenine(1519)-N(6))-dimethyltransferase</fullName>
    </alternativeName>
    <alternativeName>
        <fullName evidence="1">16S rRNA dimethyladenosine transferase</fullName>
    </alternativeName>
    <alternativeName>
        <fullName evidence="1">16S rRNA dimethylase</fullName>
    </alternativeName>
    <alternativeName>
        <fullName evidence="1">S-adenosylmethionine-6-N', N'-adenosyl(rRNA) dimethyltransferase</fullName>
    </alternativeName>
</protein>
<accession>Q60B77</accession>
<dbReference type="EC" id="2.1.1.182" evidence="1"/>
<dbReference type="EMBL" id="AE017282">
    <property type="protein sequence ID" value="AAU93125.1"/>
    <property type="molecule type" value="Genomic_DNA"/>
</dbReference>
<dbReference type="RefSeq" id="WP_010959949.1">
    <property type="nucleotide sequence ID" value="NC_002977.6"/>
</dbReference>
<dbReference type="SMR" id="Q60B77"/>
<dbReference type="STRING" id="243233.MCA0604"/>
<dbReference type="GeneID" id="88222935"/>
<dbReference type="KEGG" id="mca:MCA0604"/>
<dbReference type="eggNOG" id="COG0030">
    <property type="taxonomic scope" value="Bacteria"/>
</dbReference>
<dbReference type="HOGENOM" id="CLU_041220_0_1_6"/>
<dbReference type="Proteomes" id="UP000006821">
    <property type="component" value="Chromosome"/>
</dbReference>
<dbReference type="GO" id="GO:0005829">
    <property type="term" value="C:cytosol"/>
    <property type="evidence" value="ECO:0007669"/>
    <property type="project" value="TreeGrafter"/>
</dbReference>
<dbReference type="GO" id="GO:0052908">
    <property type="term" value="F:16S rRNA (adenine(1518)-N(6)/adenine(1519)-N(6))-dimethyltransferase activity"/>
    <property type="evidence" value="ECO:0007669"/>
    <property type="project" value="UniProtKB-EC"/>
</dbReference>
<dbReference type="GO" id="GO:0003723">
    <property type="term" value="F:RNA binding"/>
    <property type="evidence" value="ECO:0007669"/>
    <property type="project" value="UniProtKB-KW"/>
</dbReference>
<dbReference type="FunFam" id="1.10.8.100:FF:000001">
    <property type="entry name" value="Ribosomal RNA small subunit methyltransferase A"/>
    <property type="match status" value="1"/>
</dbReference>
<dbReference type="Gene3D" id="1.10.8.100">
    <property type="entry name" value="Ribosomal RNA adenine dimethylase-like, domain 2"/>
    <property type="match status" value="1"/>
</dbReference>
<dbReference type="Gene3D" id="3.40.50.150">
    <property type="entry name" value="Vaccinia Virus protein VP39"/>
    <property type="match status" value="1"/>
</dbReference>
<dbReference type="HAMAP" id="MF_00607">
    <property type="entry name" value="16SrRNA_methyltr_A"/>
    <property type="match status" value="1"/>
</dbReference>
<dbReference type="InterPro" id="IPR001737">
    <property type="entry name" value="KsgA/Erm"/>
</dbReference>
<dbReference type="InterPro" id="IPR023165">
    <property type="entry name" value="rRNA_Ade_diMease-like_C"/>
</dbReference>
<dbReference type="InterPro" id="IPR020596">
    <property type="entry name" value="rRNA_Ade_Mease_Trfase_CS"/>
</dbReference>
<dbReference type="InterPro" id="IPR020598">
    <property type="entry name" value="rRNA_Ade_methylase_Trfase_N"/>
</dbReference>
<dbReference type="InterPro" id="IPR011530">
    <property type="entry name" value="rRNA_adenine_dimethylase"/>
</dbReference>
<dbReference type="InterPro" id="IPR029063">
    <property type="entry name" value="SAM-dependent_MTases_sf"/>
</dbReference>
<dbReference type="NCBIfam" id="TIGR00755">
    <property type="entry name" value="ksgA"/>
    <property type="match status" value="1"/>
</dbReference>
<dbReference type="PANTHER" id="PTHR11727">
    <property type="entry name" value="DIMETHYLADENOSINE TRANSFERASE"/>
    <property type="match status" value="1"/>
</dbReference>
<dbReference type="PANTHER" id="PTHR11727:SF7">
    <property type="entry name" value="DIMETHYLADENOSINE TRANSFERASE-RELATED"/>
    <property type="match status" value="1"/>
</dbReference>
<dbReference type="Pfam" id="PF00398">
    <property type="entry name" value="RrnaAD"/>
    <property type="match status" value="1"/>
</dbReference>
<dbReference type="SMART" id="SM00650">
    <property type="entry name" value="rADc"/>
    <property type="match status" value="1"/>
</dbReference>
<dbReference type="SUPFAM" id="SSF53335">
    <property type="entry name" value="S-adenosyl-L-methionine-dependent methyltransferases"/>
    <property type="match status" value="1"/>
</dbReference>
<dbReference type="PROSITE" id="PS01131">
    <property type="entry name" value="RRNA_A_DIMETH"/>
    <property type="match status" value="1"/>
</dbReference>
<dbReference type="PROSITE" id="PS51689">
    <property type="entry name" value="SAM_RNA_A_N6_MT"/>
    <property type="match status" value="1"/>
</dbReference>
<comment type="function">
    <text evidence="1">Specifically dimethylates two adjacent adenosines (A1518 and A1519) in the loop of a conserved hairpin near the 3'-end of 16S rRNA in the 30S particle. May play a critical role in biogenesis of 30S subunits.</text>
</comment>
<comment type="catalytic activity">
    <reaction evidence="1">
        <text>adenosine(1518)/adenosine(1519) in 16S rRNA + 4 S-adenosyl-L-methionine = N(6)-dimethyladenosine(1518)/N(6)-dimethyladenosine(1519) in 16S rRNA + 4 S-adenosyl-L-homocysteine + 4 H(+)</text>
        <dbReference type="Rhea" id="RHEA:19609"/>
        <dbReference type="Rhea" id="RHEA-COMP:10232"/>
        <dbReference type="Rhea" id="RHEA-COMP:10233"/>
        <dbReference type="ChEBI" id="CHEBI:15378"/>
        <dbReference type="ChEBI" id="CHEBI:57856"/>
        <dbReference type="ChEBI" id="CHEBI:59789"/>
        <dbReference type="ChEBI" id="CHEBI:74411"/>
        <dbReference type="ChEBI" id="CHEBI:74493"/>
        <dbReference type="EC" id="2.1.1.182"/>
    </reaction>
</comment>
<comment type="subcellular location">
    <subcellularLocation>
        <location evidence="1">Cytoplasm</location>
    </subcellularLocation>
</comment>
<comment type="similarity">
    <text evidence="1">Belongs to the class I-like SAM-binding methyltransferase superfamily. rRNA adenine N(6)-methyltransferase family. RsmA subfamily.</text>
</comment>
<evidence type="ECO:0000255" key="1">
    <source>
        <dbReference type="HAMAP-Rule" id="MF_00607"/>
    </source>
</evidence>
<reference key="1">
    <citation type="journal article" date="2004" name="PLoS Biol.">
        <title>Genomic insights into methanotrophy: the complete genome sequence of Methylococcus capsulatus (Bath).</title>
        <authorList>
            <person name="Ward N.L."/>
            <person name="Larsen O."/>
            <person name="Sakwa J."/>
            <person name="Bruseth L."/>
            <person name="Khouri H.M."/>
            <person name="Durkin A.S."/>
            <person name="Dimitrov G."/>
            <person name="Jiang L."/>
            <person name="Scanlan D."/>
            <person name="Kang K.H."/>
            <person name="Lewis M.R."/>
            <person name="Nelson K.E."/>
            <person name="Methe B.A."/>
            <person name="Wu M."/>
            <person name="Heidelberg J.F."/>
            <person name="Paulsen I.T."/>
            <person name="Fouts D.E."/>
            <person name="Ravel J."/>
            <person name="Tettelin H."/>
            <person name="Ren Q."/>
            <person name="Read T.D."/>
            <person name="DeBoy R.T."/>
            <person name="Seshadri R."/>
            <person name="Salzberg S.L."/>
            <person name="Jensen H.B."/>
            <person name="Birkeland N.K."/>
            <person name="Nelson W.C."/>
            <person name="Dodson R.J."/>
            <person name="Grindhaug S.H."/>
            <person name="Holt I.E."/>
            <person name="Eidhammer I."/>
            <person name="Jonasen I."/>
            <person name="Vanaken S."/>
            <person name="Utterback T.R."/>
            <person name="Feldblyum T.V."/>
            <person name="Fraser C.M."/>
            <person name="Lillehaug J.R."/>
            <person name="Eisen J.A."/>
        </authorList>
    </citation>
    <scope>NUCLEOTIDE SEQUENCE [LARGE SCALE GENOMIC DNA]</scope>
    <source>
        <strain>ATCC 33009 / NCIMB 11132 / Bath</strain>
    </source>
</reference>
<feature type="chain" id="PRO_0000101556" description="Ribosomal RNA small subunit methyltransferase A">
    <location>
        <begin position="1"/>
        <end position="257"/>
    </location>
</feature>
<feature type="binding site" evidence="1">
    <location>
        <position position="12"/>
    </location>
    <ligand>
        <name>S-adenosyl-L-methionine</name>
        <dbReference type="ChEBI" id="CHEBI:59789"/>
    </ligand>
</feature>
<feature type="binding site" evidence="1">
    <location>
        <position position="14"/>
    </location>
    <ligand>
        <name>S-adenosyl-L-methionine</name>
        <dbReference type="ChEBI" id="CHEBI:59789"/>
    </ligand>
</feature>
<feature type="binding site" evidence="1">
    <location>
        <position position="39"/>
    </location>
    <ligand>
        <name>S-adenosyl-L-methionine</name>
        <dbReference type="ChEBI" id="CHEBI:59789"/>
    </ligand>
</feature>
<feature type="binding site" evidence="1">
    <location>
        <position position="60"/>
    </location>
    <ligand>
        <name>S-adenosyl-L-methionine</name>
        <dbReference type="ChEBI" id="CHEBI:59789"/>
    </ligand>
</feature>
<feature type="binding site" evidence="1">
    <location>
        <position position="85"/>
    </location>
    <ligand>
        <name>S-adenosyl-L-methionine</name>
        <dbReference type="ChEBI" id="CHEBI:59789"/>
    </ligand>
</feature>
<feature type="binding site" evidence="1">
    <location>
        <position position="105"/>
    </location>
    <ligand>
        <name>S-adenosyl-L-methionine</name>
        <dbReference type="ChEBI" id="CHEBI:59789"/>
    </ligand>
</feature>
<sequence length="257" mass="28169">MRHVPRKRFGQNFLRDPGVIQEIVAAVGPAPSDRLVEIGPGEGVLTRELLQSGACLEAIELDRDLVAALKRRFAGVGRLRIHEGDAMKFDLRTIATGERLRVVGNLPYNISTPLLFHLFDQIDVIEDMHFMLQKEVVDRLCAGAGDDHYGRLSVMAALYCQAQHLFDVGPECFHPQPKVVSAVVRLVPHAVPPDAGMVKQVSAVVVAAFGQRRKTLRNALKGLLDETAMVRAGIDPGARAEELSLADYVGLSRQLNP</sequence>
<gene>
    <name evidence="1" type="primary">rsmA</name>
    <name evidence="1" type="synonym">ksgA</name>
    <name type="ordered locus">MCA0604</name>
</gene>
<organism>
    <name type="scientific">Methylococcus capsulatus (strain ATCC 33009 / NCIMB 11132 / Bath)</name>
    <dbReference type="NCBI Taxonomy" id="243233"/>
    <lineage>
        <taxon>Bacteria</taxon>
        <taxon>Pseudomonadati</taxon>
        <taxon>Pseudomonadota</taxon>
        <taxon>Gammaproteobacteria</taxon>
        <taxon>Methylococcales</taxon>
        <taxon>Methylococcaceae</taxon>
        <taxon>Methylococcus</taxon>
    </lineage>
</organism>